<dbReference type="PIR" id="B90667">
    <property type="entry name" value="B90667"/>
</dbReference>
<dbReference type="SMR" id="P69043"/>
<dbReference type="InParanoid" id="P69043"/>
<dbReference type="Proteomes" id="UP000001811">
    <property type="component" value="Unplaced"/>
</dbReference>
<dbReference type="GO" id="GO:0005576">
    <property type="term" value="C:extracellular region"/>
    <property type="evidence" value="ECO:0007669"/>
    <property type="project" value="UniProtKB-SubCell"/>
</dbReference>
<dbReference type="GO" id="GO:0005185">
    <property type="term" value="F:neurohypophyseal hormone activity"/>
    <property type="evidence" value="ECO:0007669"/>
    <property type="project" value="InterPro"/>
</dbReference>
<dbReference type="InterPro" id="IPR022423">
    <property type="entry name" value="Neurohypophysial_hormone_CS"/>
</dbReference>
<dbReference type="Pfam" id="PF00220">
    <property type="entry name" value="Hormone_4"/>
    <property type="match status" value="1"/>
</dbReference>
<dbReference type="PROSITE" id="PS00264">
    <property type="entry name" value="NEUROHYPOPHYS_HORM"/>
    <property type="match status" value="1"/>
</dbReference>
<reference key="1">
    <citation type="journal article" date="1971" name="Biochimie">
        <title>Evolution of neurohypophyseal hormones: isolation of active principles from rabbits and rats.</title>
        <authorList>
            <person name="Chauvet J."/>
            <person name="Chauvet M.-T."/>
            <person name="Acher R."/>
        </authorList>
    </citation>
    <scope>PROTEIN SEQUENCE</scope>
    <scope>DISULFIDE BOND</scope>
    <scope>AMIDATION AT GLY-9</scope>
</reference>
<feature type="peptide" id="PRO_0000044084" description="Oxytocin">
    <location>
        <begin position="1"/>
        <end position="9"/>
    </location>
</feature>
<feature type="modified residue" description="Glycine amide" evidence="2">
    <location>
        <position position="9"/>
    </location>
</feature>
<feature type="disulfide bond" evidence="2">
    <location>
        <begin position="1"/>
        <end position="6"/>
    </location>
</feature>
<protein>
    <recommendedName>
        <fullName>Oxytocin</fullName>
    </recommendedName>
    <alternativeName>
        <fullName>Ocytocin</fullName>
    </alternativeName>
</protein>
<accession>P69043</accession>
<accession>P01188</accession>
<accession>P32878</accession>
<proteinExistence type="evidence at protein level"/>
<organism>
    <name type="scientific">Oryctolagus cuniculus</name>
    <name type="common">Rabbit</name>
    <dbReference type="NCBI Taxonomy" id="9986"/>
    <lineage>
        <taxon>Eukaryota</taxon>
        <taxon>Metazoa</taxon>
        <taxon>Chordata</taxon>
        <taxon>Craniata</taxon>
        <taxon>Vertebrata</taxon>
        <taxon>Euteleostomi</taxon>
        <taxon>Mammalia</taxon>
        <taxon>Eutheria</taxon>
        <taxon>Euarchontoglires</taxon>
        <taxon>Glires</taxon>
        <taxon>Lagomorpha</taxon>
        <taxon>Leporidae</taxon>
        <taxon>Oryctolagus</taxon>
    </lineage>
</organism>
<sequence length="9" mass="1010">CYIQNCPLG</sequence>
<keyword id="KW-0027">Amidation</keyword>
<keyword id="KW-0903">Direct protein sequencing</keyword>
<keyword id="KW-1015">Disulfide bond</keyword>
<keyword id="KW-0372">Hormone</keyword>
<keyword id="KW-1185">Reference proteome</keyword>
<keyword id="KW-0964">Secreted</keyword>
<evidence type="ECO:0000250" key="1">
    <source>
        <dbReference type="UniProtKB" id="P01178"/>
    </source>
</evidence>
<evidence type="ECO:0000269" key="2">
    <source>
    </source>
</evidence>
<evidence type="ECO:0000305" key="3"/>
<comment type="function">
    <text>Oxytocin causes contraction of the smooth muscle of the uterus and of the mammary gland.</text>
</comment>
<comment type="function">
    <text evidence="1">Oxytocin causes contraction of the smooth muscle of the uterus and of the mammary gland. Acts by binding to oxytocin receptor (OXTR) (By similarity).</text>
</comment>
<comment type="subunit">
    <text evidence="1">Interacts with oxytocin receptor (Ki=1.5 nM) (By similarity). Interacts with vasopressin V1aR/AVPR1A (Ki=37 nM), V1bR/AVPR1B (Ki=222 nM), and V2R/AVPR2 receptors (Ki=823 nM) (By similarity).</text>
</comment>
<comment type="subcellular location">
    <subcellularLocation>
        <location>Secreted</location>
    </subcellularLocation>
</comment>
<comment type="similarity">
    <text evidence="3">Belongs to the vasopressin/oxytocin family.</text>
</comment>
<gene>
    <name type="primary">OXT</name>
</gene>
<name>NEU1_RABIT</name>